<sequence>LSTDIVAPPV</sequence>
<name>VMXP_PHIPA</name>
<evidence type="ECO:0000250" key="1"/>
<evidence type="ECO:0000269" key="2">
    <source>
    </source>
</evidence>
<evidence type="ECO:0000269" key="3">
    <source ref="1"/>
</evidence>
<evidence type="ECO:0000303" key="4">
    <source ref="1"/>
</evidence>
<evidence type="ECO:0000305" key="5"/>
<accession>P85103</accession>
<feature type="chain" id="PRO_0000284773" description="Snake venom metalloproteinase patagonfibrase">
    <location>
        <begin position="1" status="less than"/>
        <end position="10" status="greater than"/>
    </location>
</feature>
<feature type="binding site" evidence="1">
    <location>
        <position position="10"/>
    </location>
    <ligand>
        <name>Ca(2+)</name>
        <dbReference type="ChEBI" id="CHEBI:29108"/>
    </ligand>
</feature>
<feature type="non-terminal residue" evidence="4">
    <location>
        <position position="1"/>
    </location>
</feature>
<feature type="non-terminal residue" evidence="4">
    <location>
        <position position="10"/>
    </location>
</feature>
<comment type="function">
    <text evidence="2">Snake venom zinc metalloprotease that hydrolyzes the alpha chain of fibrinogen (FGA) but not the beta or gamma chains. Has caseinolytic activity. Induces hemorrhage after intradermal injection into mice. Intramuscular injection into the gastrocnemius muscle of mice causes hemorrhage, edema, myonecrosis, increase in serum creatine kinase levels and multifocal lung hemorrhage. Inhibits collagen-induced platelet aggregation, but not thrombin- or ristocetin-induced platelet aggregation.</text>
</comment>
<comment type="activity regulation">
    <text evidence="2">Inhibited by DTT, EDTA and L-cysteine, but not by the serine protease inhibitor PMSF. Activated by calcium, unaffected by magnesium, inhibited by zinc.</text>
</comment>
<comment type="biophysicochemical properties">
    <phDependence>
        <text evidence="2">Optimum pH is 7.5 with azocasein as substrate. Incubation at a pH of below 6.0 or above 9.5 results in an abrupt decrease in activity.</text>
    </phDependence>
    <temperatureDependence>
        <text evidence="2">Optimum temperature is 37 degrees Celsius with azocasein as substrate. Incubation at 55 degrees Celsius for 90 minutes reduces activity to 20% of its maximum.</text>
    </temperatureDependence>
</comment>
<comment type="subunit">
    <text evidence="2">Monomer.</text>
</comment>
<comment type="subcellular location">
    <subcellularLocation>
        <location evidence="2">Secreted</location>
    </subcellularLocation>
</comment>
<comment type="tissue specificity">
    <text evidence="2">Expressed by the venom gland.</text>
</comment>
<comment type="mass spectrometry"/>
<comment type="similarity">
    <text evidence="5">Belongs to the venom metalloproteinase (M12B) family.</text>
</comment>
<protein>
    <recommendedName>
        <fullName>Snake venom metalloproteinase patagonfibrase</fullName>
        <shortName>SVMP</shortName>
        <ecNumber>3.4.24.-</ecNumber>
    </recommendedName>
</protein>
<proteinExistence type="evidence at protein level"/>
<keyword id="KW-0106">Calcium</keyword>
<keyword id="KW-0903">Direct protein sequencing</keyword>
<keyword id="KW-1200">Hemorrhagic toxin</keyword>
<keyword id="KW-1199">Hemostasis impairing toxin</keyword>
<keyword id="KW-0378">Hydrolase</keyword>
<keyword id="KW-0479">Metal-binding</keyword>
<keyword id="KW-0482">Metalloprotease</keyword>
<keyword id="KW-1201">Platelet aggregation inhibiting toxin</keyword>
<keyword id="KW-0645">Protease</keyword>
<keyword id="KW-0964">Secreted</keyword>
<keyword id="KW-0800">Toxin</keyword>
<organism>
    <name type="scientific">Philodryas patagoniensis</name>
    <name type="common">Ringless green snake</name>
    <dbReference type="NCBI Taxonomy" id="120310"/>
    <lineage>
        <taxon>Eukaryota</taxon>
        <taxon>Metazoa</taxon>
        <taxon>Chordata</taxon>
        <taxon>Craniata</taxon>
        <taxon>Vertebrata</taxon>
        <taxon>Euteleostomi</taxon>
        <taxon>Lepidosauria</taxon>
        <taxon>Squamata</taxon>
        <taxon>Bifurcata</taxon>
        <taxon>Unidentata</taxon>
        <taxon>Episquamata</taxon>
        <taxon>Toxicofera</taxon>
        <taxon>Serpentes</taxon>
        <taxon>Colubroidea</taxon>
        <taxon>Dipsadidae</taxon>
        <taxon>Philodryas</taxon>
    </lineage>
</organism>
<reference evidence="5" key="1">
    <citation type="submission" date="2010-03" db="UniProtKB">
        <title>Partial amino acid sequence and some features of patagonfibrase, a hemorrhagic metalloprotease isolated from Philodryas patagoniensis snake venom.</title>
        <authorList>
            <person name="Peichoto M.E."/>
            <person name="Batista I.F.C."/>
            <person name="Acosta O."/>
            <person name="Mitiko A."/>
            <person name="Tanaka-Azevedo A.M."/>
            <person name="Santoro M.L."/>
        </authorList>
    </citation>
    <scope>PROTEIN SEQUENCE</scope>
    <source>
        <tissue evidence="3">Venom</tissue>
    </source>
</reference>
<reference evidence="5" key="2">
    <citation type="journal article" date="2007" name="Biochim. Biophys. Acta">
        <title>Purification and characterization of patagonfibrase, a metalloproteinase showing alpha-fibrinogenolytic and hemorrhagic activities, from Philodryas patagoniensis snake venom.</title>
        <authorList>
            <person name="Peichoto M.E."/>
            <person name="Teibler P."/>
            <person name="Mackessy S.P."/>
            <person name="Leiva L."/>
            <person name="Acosta O."/>
            <person name="Goncalves L.R."/>
            <person name="Tanaka-Azevedo A.M."/>
            <person name="Santoro M.L."/>
        </authorList>
    </citation>
    <scope>FUNCTION</scope>
    <scope>ACTIVITY REGULATION</scope>
    <scope>BIOPHYSICOCHEMICAL PROPERTIES</scope>
    <scope>SUBUNIT</scope>
    <scope>SUBCELLULAR LOCATION</scope>
    <scope>TISSUE SPECIFICITY</scope>
    <scope>MASS SPECTROMETRY</scope>
    <source>
        <tissue>Venom</tissue>
    </source>
</reference>
<dbReference type="EC" id="3.4.24.-"/>
<dbReference type="GO" id="GO:0005576">
    <property type="term" value="C:extracellular region"/>
    <property type="evidence" value="ECO:0007669"/>
    <property type="project" value="UniProtKB-SubCell"/>
</dbReference>
<dbReference type="GO" id="GO:0046872">
    <property type="term" value="F:metal ion binding"/>
    <property type="evidence" value="ECO:0007669"/>
    <property type="project" value="UniProtKB-KW"/>
</dbReference>
<dbReference type="GO" id="GO:0008237">
    <property type="term" value="F:metallopeptidase activity"/>
    <property type="evidence" value="ECO:0007669"/>
    <property type="project" value="UniProtKB-KW"/>
</dbReference>
<dbReference type="GO" id="GO:0090729">
    <property type="term" value="F:toxin activity"/>
    <property type="evidence" value="ECO:0007669"/>
    <property type="project" value="UniProtKB-KW"/>
</dbReference>
<dbReference type="GO" id="GO:0006508">
    <property type="term" value="P:proteolysis"/>
    <property type="evidence" value="ECO:0007669"/>
    <property type="project" value="UniProtKB-KW"/>
</dbReference>